<gene>
    <name evidence="1" type="primary">pebA</name>
    <name type="ordered locus">PMT9312_1685</name>
</gene>
<organism>
    <name type="scientific">Prochlorococcus marinus (strain MIT 9312)</name>
    <dbReference type="NCBI Taxonomy" id="74546"/>
    <lineage>
        <taxon>Bacteria</taxon>
        <taxon>Bacillati</taxon>
        <taxon>Cyanobacteriota</taxon>
        <taxon>Cyanophyceae</taxon>
        <taxon>Synechococcales</taxon>
        <taxon>Prochlorococcaceae</taxon>
        <taxon>Prochlorococcus</taxon>
    </lineage>
</organism>
<keyword id="KW-0560">Oxidoreductase</keyword>
<dbReference type="EC" id="1.3.7.2" evidence="1"/>
<dbReference type="EMBL" id="CP000111">
    <property type="protein sequence ID" value="ABB50746.1"/>
    <property type="molecule type" value="Genomic_DNA"/>
</dbReference>
<dbReference type="RefSeq" id="WP_011377227.1">
    <property type="nucleotide sequence ID" value="NC_007577.1"/>
</dbReference>
<dbReference type="SMR" id="Q318E9"/>
<dbReference type="STRING" id="74546.PMT9312_1685"/>
<dbReference type="KEGG" id="pmi:PMT9312_1685"/>
<dbReference type="eggNOG" id="ENOG502Z8J9">
    <property type="taxonomic scope" value="Bacteria"/>
</dbReference>
<dbReference type="HOGENOM" id="CLU_086208_0_0_3"/>
<dbReference type="OrthoDB" id="527390at2"/>
<dbReference type="Proteomes" id="UP000002715">
    <property type="component" value="Chromosome"/>
</dbReference>
<dbReference type="GO" id="GO:0050617">
    <property type="term" value="F:15,16-dihydrobiliverdin:ferredoxin oxidoreductase activity"/>
    <property type="evidence" value="ECO:0007669"/>
    <property type="project" value="UniProtKB-UniRule"/>
</dbReference>
<dbReference type="GO" id="GO:0050897">
    <property type="term" value="F:cobalt ion binding"/>
    <property type="evidence" value="ECO:0007669"/>
    <property type="project" value="InterPro"/>
</dbReference>
<dbReference type="GO" id="GO:0010024">
    <property type="term" value="P:phytochromobilin biosynthetic process"/>
    <property type="evidence" value="ECO:0007669"/>
    <property type="project" value="InterPro"/>
</dbReference>
<dbReference type="Gene3D" id="3.40.1500.20">
    <property type="match status" value="1"/>
</dbReference>
<dbReference type="HAMAP" id="MF_00792">
    <property type="entry name" value="PebA"/>
    <property type="match status" value="1"/>
</dbReference>
<dbReference type="InterPro" id="IPR023658">
    <property type="entry name" value="DiHydbiliverdin_OxRdtase"/>
</dbReference>
<dbReference type="InterPro" id="IPR009249">
    <property type="entry name" value="Ferredoxin-dep_bilin_Rdtase"/>
</dbReference>
<dbReference type="NCBIfam" id="NF009719">
    <property type="entry name" value="PRK13246.1"/>
    <property type="match status" value="1"/>
</dbReference>
<dbReference type="PANTHER" id="PTHR34557">
    <property type="entry name" value="PHYTOCHROMOBILIN:FERREDOXIN OXIDOREDUCTASE, CHLOROPLASTIC"/>
    <property type="match status" value="1"/>
</dbReference>
<dbReference type="PANTHER" id="PTHR34557:SF1">
    <property type="entry name" value="PHYTOCHROMOBILIN:FERREDOXIN OXIDOREDUCTASE, CHLOROPLASTIC"/>
    <property type="match status" value="1"/>
</dbReference>
<dbReference type="Pfam" id="PF05996">
    <property type="entry name" value="Fe_bilin_red"/>
    <property type="match status" value="1"/>
</dbReference>
<accession>Q318E9</accession>
<comment type="function">
    <text evidence="1">Catalyzes the two-electron reduction of biliverdin IX-alpha at the C15 methine bridge.</text>
</comment>
<comment type="catalytic activity">
    <reaction evidence="1">
        <text>15,16-dihydrobiliverdin + oxidized 2[4Fe-4S]-[ferredoxin] = biliverdin IXalpha + reduced 2[4Fe-4S]-[ferredoxin] + 2 H(+)</text>
        <dbReference type="Rhea" id="RHEA:10168"/>
        <dbReference type="Rhea" id="RHEA-COMP:10002"/>
        <dbReference type="Rhea" id="RHEA-COMP:10004"/>
        <dbReference type="ChEBI" id="CHEBI:15378"/>
        <dbReference type="ChEBI" id="CHEBI:33722"/>
        <dbReference type="ChEBI" id="CHEBI:33723"/>
        <dbReference type="ChEBI" id="CHEBI:57899"/>
        <dbReference type="ChEBI" id="CHEBI:57991"/>
        <dbReference type="EC" id="1.3.7.2"/>
    </reaction>
</comment>
<comment type="similarity">
    <text evidence="1">Belongs to the HY2 family.</text>
</comment>
<name>PEBA_PROM9</name>
<feature type="chain" id="PRO_1000046921" description="15,16-dihydrobiliverdin:ferredoxin oxidoreductase">
    <location>
        <begin position="1"/>
        <end position="236"/>
    </location>
</feature>
<sequence>MFDSLVDFLKTNIDELNGHELQISNEFKEHHNKDSKYIIKNWLFSSPEYRKWRITRLDGGKNIQVFNTVAYPNFDSELPILGADILWFGTAKKLLAILDYQPLIQENKYLEKYCSSLGMIKKKYSAFDNNKMKNIYDSKKYFSPWVIICRGNKLNLDRDLNDVFHAFINNYLNLNKSNPVNQFLNLEEIKINQIKYDKYSFEKDPADKLFKSFFGEKWTKKFINKFLFTLNNEIIL</sequence>
<proteinExistence type="inferred from homology"/>
<evidence type="ECO:0000255" key="1">
    <source>
        <dbReference type="HAMAP-Rule" id="MF_00792"/>
    </source>
</evidence>
<protein>
    <recommendedName>
        <fullName evidence="1">15,16-dihydrobiliverdin:ferredoxin oxidoreductase</fullName>
        <ecNumber evidence="1">1.3.7.2</ecNumber>
    </recommendedName>
</protein>
<reference key="1">
    <citation type="journal article" date="2006" name="Science">
        <title>Genomic islands and the ecology and evolution of Prochlorococcus.</title>
        <authorList>
            <person name="Coleman M.L."/>
            <person name="Sullivan M.B."/>
            <person name="Martiny A.C."/>
            <person name="Steglich C."/>
            <person name="Barry K."/>
            <person name="Delong E.F."/>
            <person name="Chisholm S.W."/>
        </authorList>
    </citation>
    <scope>NUCLEOTIDE SEQUENCE [LARGE SCALE GENOMIC DNA]</scope>
    <source>
        <strain>MIT 9312</strain>
    </source>
</reference>